<proteinExistence type="inferred from homology"/>
<keyword id="KW-0030">Aminoacyl-tRNA synthetase</keyword>
<keyword id="KW-0067">ATP-binding</keyword>
<keyword id="KW-0963">Cytoplasm</keyword>
<keyword id="KW-0436">Ligase</keyword>
<keyword id="KW-0479">Metal-binding</keyword>
<keyword id="KW-0547">Nucleotide-binding</keyword>
<keyword id="KW-0648">Protein biosynthesis</keyword>
<keyword id="KW-1185">Reference proteome</keyword>
<keyword id="KW-0694">RNA-binding</keyword>
<keyword id="KW-0820">tRNA-binding</keyword>
<keyword id="KW-0862">Zinc</keyword>
<organism>
    <name type="scientific">Phytoplasma australiense</name>
    <dbReference type="NCBI Taxonomy" id="59748"/>
    <lineage>
        <taxon>Bacteria</taxon>
        <taxon>Bacillati</taxon>
        <taxon>Mycoplasmatota</taxon>
        <taxon>Mollicutes</taxon>
        <taxon>Acholeplasmatales</taxon>
        <taxon>Acholeplasmataceae</taxon>
        <taxon>Candidatus Phytoplasma</taxon>
        <taxon>16SrXII (Stolbur group)</taxon>
    </lineage>
</organism>
<sequence>MIKINLLNHQSHSFPSKTTPLEIWKNWLKKTLKKPVAALFNQKFIELDYPLTQDGDLEILAESNPKSLFVLNHSTAHLMAQAIQRLYPNALFTIGPAIKEGFYYDIDFQNHSISEKDLPTIEKKMHEVALENHSMIMKKVTHDEAKRLFSYNPYKLILLEKHKEEDITVCHQGEFIDLCRGGHIPKLSLIKHFKLLKISGSYFQGDAKNKSLTRIYGTSFFKKEDLGNYLKLLEERKERDHKRLNKKLDLFMFSQEVGLGLPFWLPKGATLRRIVERYIVDKELSHQYHHVYTPIMANVELYRTSGHLEHYSQNMFPVMQLENKEKIVLRPMNCPHHMMIYKKSPRSYKELPLRIAELGMMHRFEKSGAVSGLQRVREMNLNDAHNFVRPDQIEEEIKKIINLILEVYRDFKITKYEFRLSYRDPQDKEKYFPDDNMWQHAENILKKTIQELNLPFREAIGDAAFYGPKLDVQVLTALGNEETLSTIQLDFLLPQKFDLTFIDANNKHCRPVVIHRAIVSTLERFLSHLIEENKGVFPLWLAPVQILLIPVSSSVNLKYTQEIKELLLSQGLRAEINSKEATLGYKIREAQELKIPYQIVVGDNEIAKNLITFRKYGQKNQTTTNIETFISSLNQEIMEKR</sequence>
<dbReference type="EC" id="6.1.1.3" evidence="1"/>
<dbReference type="EMBL" id="AM422018">
    <property type="protein sequence ID" value="CAM11353.1"/>
    <property type="molecule type" value="Genomic_DNA"/>
</dbReference>
<dbReference type="SMR" id="B1V8W6"/>
<dbReference type="STRING" id="59748.PA0018"/>
<dbReference type="KEGG" id="pal:PA0018"/>
<dbReference type="eggNOG" id="COG0441">
    <property type="taxonomic scope" value="Bacteria"/>
</dbReference>
<dbReference type="Proteomes" id="UP000008323">
    <property type="component" value="Chromosome"/>
</dbReference>
<dbReference type="GO" id="GO:0005737">
    <property type="term" value="C:cytoplasm"/>
    <property type="evidence" value="ECO:0007669"/>
    <property type="project" value="UniProtKB-SubCell"/>
</dbReference>
<dbReference type="GO" id="GO:0005524">
    <property type="term" value="F:ATP binding"/>
    <property type="evidence" value="ECO:0007669"/>
    <property type="project" value="UniProtKB-UniRule"/>
</dbReference>
<dbReference type="GO" id="GO:0046872">
    <property type="term" value="F:metal ion binding"/>
    <property type="evidence" value="ECO:0007669"/>
    <property type="project" value="UniProtKB-KW"/>
</dbReference>
<dbReference type="GO" id="GO:0004829">
    <property type="term" value="F:threonine-tRNA ligase activity"/>
    <property type="evidence" value="ECO:0007669"/>
    <property type="project" value="UniProtKB-UniRule"/>
</dbReference>
<dbReference type="GO" id="GO:0000049">
    <property type="term" value="F:tRNA binding"/>
    <property type="evidence" value="ECO:0007669"/>
    <property type="project" value="UniProtKB-KW"/>
</dbReference>
<dbReference type="GO" id="GO:0006435">
    <property type="term" value="P:threonyl-tRNA aminoacylation"/>
    <property type="evidence" value="ECO:0007669"/>
    <property type="project" value="UniProtKB-UniRule"/>
</dbReference>
<dbReference type="CDD" id="cd01667">
    <property type="entry name" value="TGS_ThrRS"/>
    <property type="match status" value="1"/>
</dbReference>
<dbReference type="CDD" id="cd00860">
    <property type="entry name" value="ThrRS_anticodon"/>
    <property type="match status" value="1"/>
</dbReference>
<dbReference type="CDD" id="cd00771">
    <property type="entry name" value="ThrRS_core"/>
    <property type="match status" value="1"/>
</dbReference>
<dbReference type="FunFam" id="3.30.930.10:FF:000002">
    <property type="entry name" value="Threonine--tRNA ligase"/>
    <property type="match status" value="1"/>
</dbReference>
<dbReference type="FunFam" id="3.40.50.800:FF:000001">
    <property type="entry name" value="Threonine--tRNA ligase"/>
    <property type="match status" value="1"/>
</dbReference>
<dbReference type="FunFam" id="3.30.980.10:FF:000005">
    <property type="entry name" value="Threonyl-tRNA synthetase, mitochondrial"/>
    <property type="match status" value="1"/>
</dbReference>
<dbReference type="Gene3D" id="3.10.20.30">
    <property type="match status" value="1"/>
</dbReference>
<dbReference type="Gene3D" id="3.30.54.20">
    <property type="match status" value="1"/>
</dbReference>
<dbReference type="Gene3D" id="3.40.50.800">
    <property type="entry name" value="Anticodon-binding domain"/>
    <property type="match status" value="1"/>
</dbReference>
<dbReference type="Gene3D" id="3.30.930.10">
    <property type="entry name" value="Bira Bifunctional Protein, Domain 2"/>
    <property type="match status" value="1"/>
</dbReference>
<dbReference type="Gene3D" id="3.30.980.10">
    <property type="entry name" value="Threonyl-trna Synthetase, Chain A, domain 2"/>
    <property type="match status" value="1"/>
</dbReference>
<dbReference type="HAMAP" id="MF_00184">
    <property type="entry name" value="Thr_tRNA_synth"/>
    <property type="match status" value="1"/>
</dbReference>
<dbReference type="InterPro" id="IPR002314">
    <property type="entry name" value="aa-tRNA-synt_IIb"/>
</dbReference>
<dbReference type="InterPro" id="IPR006195">
    <property type="entry name" value="aa-tRNA-synth_II"/>
</dbReference>
<dbReference type="InterPro" id="IPR045864">
    <property type="entry name" value="aa-tRNA-synth_II/BPL/LPL"/>
</dbReference>
<dbReference type="InterPro" id="IPR004154">
    <property type="entry name" value="Anticodon-bd"/>
</dbReference>
<dbReference type="InterPro" id="IPR036621">
    <property type="entry name" value="Anticodon-bd_dom_sf"/>
</dbReference>
<dbReference type="InterPro" id="IPR012675">
    <property type="entry name" value="Beta-grasp_dom_sf"/>
</dbReference>
<dbReference type="InterPro" id="IPR004095">
    <property type="entry name" value="TGS"/>
</dbReference>
<dbReference type="InterPro" id="IPR002320">
    <property type="entry name" value="Thr-tRNA-ligase_IIa"/>
</dbReference>
<dbReference type="InterPro" id="IPR018163">
    <property type="entry name" value="Thr/Ala-tRNA-synth_IIc_edit"/>
</dbReference>
<dbReference type="InterPro" id="IPR047246">
    <property type="entry name" value="ThrRS_anticodon"/>
</dbReference>
<dbReference type="InterPro" id="IPR033728">
    <property type="entry name" value="ThrRS_core"/>
</dbReference>
<dbReference type="InterPro" id="IPR012947">
    <property type="entry name" value="tRNA_SAD"/>
</dbReference>
<dbReference type="NCBIfam" id="TIGR00418">
    <property type="entry name" value="thrS"/>
    <property type="match status" value="1"/>
</dbReference>
<dbReference type="PANTHER" id="PTHR11451:SF56">
    <property type="entry name" value="THREONINE--TRNA LIGASE 1"/>
    <property type="match status" value="1"/>
</dbReference>
<dbReference type="PANTHER" id="PTHR11451">
    <property type="entry name" value="THREONINE-TRNA LIGASE"/>
    <property type="match status" value="1"/>
</dbReference>
<dbReference type="Pfam" id="PF03129">
    <property type="entry name" value="HGTP_anticodon"/>
    <property type="match status" value="1"/>
</dbReference>
<dbReference type="Pfam" id="PF00587">
    <property type="entry name" value="tRNA-synt_2b"/>
    <property type="match status" value="1"/>
</dbReference>
<dbReference type="Pfam" id="PF07973">
    <property type="entry name" value="tRNA_SAD"/>
    <property type="match status" value="1"/>
</dbReference>
<dbReference type="PRINTS" id="PR01047">
    <property type="entry name" value="TRNASYNTHTHR"/>
</dbReference>
<dbReference type="SMART" id="SM00863">
    <property type="entry name" value="tRNA_SAD"/>
    <property type="match status" value="1"/>
</dbReference>
<dbReference type="SUPFAM" id="SSF52954">
    <property type="entry name" value="Class II aaRS ABD-related"/>
    <property type="match status" value="1"/>
</dbReference>
<dbReference type="SUPFAM" id="SSF55681">
    <property type="entry name" value="Class II aaRS and biotin synthetases"/>
    <property type="match status" value="1"/>
</dbReference>
<dbReference type="SUPFAM" id="SSF55186">
    <property type="entry name" value="ThrRS/AlaRS common domain"/>
    <property type="match status" value="1"/>
</dbReference>
<dbReference type="PROSITE" id="PS50862">
    <property type="entry name" value="AA_TRNA_LIGASE_II"/>
    <property type="match status" value="1"/>
</dbReference>
<dbReference type="PROSITE" id="PS51880">
    <property type="entry name" value="TGS"/>
    <property type="match status" value="1"/>
</dbReference>
<protein>
    <recommendedName>
        <fullName evidence="1">Threonine--tRNA ligase</fullName>
        <ecNumber evidence="1">6.1.1.3</ecNumber>
    </recommendedName>
    <alternativeName>
        <fullName evidence="1">Threonyl-tRNA synthetase</fullName>
        <shortName evidence="1">ThrRS</shortName>
    </alternativeName>
</protein>
<evidence type="ECO:0000255" key="1">
    <source>
        <dbReference type="HAMAP-Rule" id="MF_00184"/>
    </source>
</evidence>
<evidence type="ECO:0000255" key="2">
    <source>
        <dbReference type="PROSITE-ProRule" id="PRU01228"/>
    </source>
</evidence>
<comment type="function">
    <text evidence="1">Catalyzes the attachment of threonine to tRNA(Thr) in a two-step reaction: L-threonine is first activated by ATP to form Thr-AMP and then transferred to the acceptor end of tRNA(Thr). Also edits incorrectly charged L-seryl-tRNA(Thr).</text>
</comment>
<comment type="catalytic activity">
    <reaction evidence="1">
        <text>tRNA(Thr) + L-threonine + ATP = L-threonyl-tRNA(Thr) + AMP + diphosphate + H(+)</text>
        <dbReference type="Rhea" id="RHEA:24624"/>
        <dbReference type="Rhea" id="RHEA-COMP:9670"/>
        <dbReference type="Rhea" id="RHEA-COMP:9704"/>
        <dbReference type="ChEBI" id="CHEBI:15378"/>
        <dbReference type="ChEBI" id="CHEBI:30616"/>
        <dbReference type="ChEBI" id="CHEBI:33019"/>
        <dbReference type="ChEBI" id="CHEBI:57926"/>
        <dbReference type="ChEBI" id="CHEBI:78442"/>
        <dbReference type="ChEBI" id="CHEBI:78534"/>
        <dbReference type="ChEBI" id="CHEBI:456215"/>
        <dbReference type="EC" id="6.1.1.3"/>
    </reaction>
</comment>
<comment type="cofactor">
    <cofactor evidence="1">
        <name>Zn(2+)</name>
        <dbReference type="ChEBI" id="CHEBI:29105"/>
    </cofactor>
    <text evidence="1">Binds 1 zinc ion per subunit.</text>
</comment>
<comment type="subunit">
    <text evidence="1">Homodimer.</text>
</comment>
<comment type="subcellular location">
    <subcellularLocation>
        <location evidence="1">Cytoplasm</location>
    </subcellularLocation>
</comment>
<comment type="similarity">
    <text evidence="1">Belongs to the class-II aminoacyl-tRNA synthetase family.</text>
</comment>
<gene>
    <name evidence="1" type="primary">thrS</name>
    <name type="ordered locus">PA0018</name>
</gene>
<feature type="chain" id="PRO_1000199559" description="Threonine--tRNA ligase">
    <location>
        <begin position="1"/>
        <end position="641"/>
    </location>
</feature>
<feature type="domain" description="TGS" evidence="2">
    <location>
        <begin position="1"/>
        <end position="61"/>
    </location>
</feature>
<feature type="region of interest" description="Catalytic" evidence="1">
    <location>
        <begin position="240"/>
        <end position="538"/>
    </location>
</feature>
<feature type="binding site" evidence="1">
    <location>
        <position position="334"/>
    </location>
    <ligand>
        <name>Zn(2+)</name>
        <dbReference type="ChEBI" id="CHEBI:29105"/>
    </ligand>
</feature>
<feature type="binding site" evidence="1">
    <location>
        <position position="385"/>
    </location>
    <ligand>
        <name>Zn(2+)</name>
        <dbReference type="ChEBI" id="CHEBI:29105"/>
    </ligand>
</feature>
<feature type="binding site" evidence="1">
    <location>
        <position position="515"/>
    </location>
    <ligand>
        <name>Zn(2+)</name>
        <dbReference type="ChEBI" id="CHEBI:29105"/>
    </ligand>
</feature>
<accession>B1V8W6</accession>
<name>SYT_PHYAS</name>
<reference key="1">
    <citation type="journal article" date="2008" name="J. Bacteriol.">
        <title>Comparative genome analysis of 'Candidatus Phytoplasma australiense' (subgroup tuf-Australia I; rp-A) and 'Ca. Phytoplasma asteris' strains OY-M and AY-WB.</title>
        <authorList>
            <person name="Tran-Nguyen L.T."/>
            <person name="Kube M."/>
            <person name="Schneider B."/>
            <person name="Reinhardt R."/>
            <person name="Gibb K.S."/>
        </authorList>
    </citation>
    <scope>NUCLEOTIDE SEQUENCE [LARGE SCALE GENOMIC DNA]</scope>
</reference>